<proteinExistence type="evidence at protein level"/>
<reference key="1">
    <citation type="journal article" date="1991" name="J. Biol. Chem.">
        <title>Molecular cloning and characterization of the acidic 80-kDa protein kinase C substrate from rat brain. Identification as a glycoprotein.</title>
        <authorList>
            <person name="Erusalimsky J.D."/>
            <person name="Brooks S.F."/>
            <person name="Herget T."/>
            <person name="Morris C."/>
            <person name="Rozengurt E."/>
        </authorList>
    </citation>
    <scope>NUCLEOTIDE SEQUENCE [MRNA]</scope>
    <source>
        <tissue>Brain</tissue>
    </source>
</reference>
<reference key="2">
    <citation type="journal article" date="1989" name="FEBS Lett.">
        <title>Internal amino acid sequence analysis of the 80 kDa protein kinase C substrate from rat brain: relationship to the 87 kDa substrate from bovine brain.</title>
        <authorList>
            <person name="Erusalimsky J.D."/>
            <person name="Morris C."/>
            <person name="Perks K."/>
            <person name="Brown R."/>
            <person name="Brooks S."/>
            <person name="Rozengurt E."/>
        </authorList>
    </citation>
    <scope>PROTEIN SEQUENCE OF 12-31; 189-217; 252-275 AND 300-309</scope>
    <source>
        <tissue>Brain</tissue>
    </source>
</reference>
<reference key="3">
    <citation type="journal article" date="1992" name="Eur. J. Biochem.">
        <title>Relationship between the major protein kinase C substrates acidic 80-kDa protein-kinase-C substrate (80K) and myristoylated alanine-rich C-kinase substrate (MARCKS). Members of a gene family or equivalent genes in different species.</title>
        <authorList>
            <person name="Herget T."/>
            <person name="Brooks S.F."/>
            <person name="Broad S."/>
            <person name="Rozengurt E."/>
        </authorList>
    </citation>
    <scope>NUCLEOTIDE SEQUENCE [MRNA] OF 182-301</scope>
    <scope>TISSUE SPECIFICITY</scope>
</reference>
<reference key="4">
    <citation type="journal article" date="1993" name="Biochem. Biophys. Res. Commun.">
        <title>Protein kinase C phosphorylates Ser-152, Ser-156 and Ser-163 but not Ser-160 of MARCKS in rat brain.</title>
        <authorList>
            <person name="Heemskerk F.M."/>
            <person name="Chen H.C."/>
            <person name="Huang F.L."/>
        </authorList>
    </citation>
    <scope>PHOSPHORYLATION AT SER-152; SER-156 AND SER-163</scope>
    <source>
        <tissue>Brain</tissue>
    </source>
</reference>
<reference key="5">
    <citation type="journal article" date="2012" name="Nat. Commun.">
        <title>Quantitative maps of protein phosphorylation sites across 14 different rat organs and tissues.</title>
        <authorList>
            <person name="Lundby A."/>
            <person name="Secher A."/>
            <person name="Lage K."/>
            <person name="Nordsborg N.B."/>
            <person name="Dmytriyev A."/>
            <person name="Lundby C."/>
            <person name="Olsen J.V."/>
        </authorList>
    </citation>
    <scope>PHOSPHORYLATION [LARGE SCALE ANALYSIS] AT SER-26; SER-27; SER-29; SER-46; SER-63; SER-74; THR-79; SER-113; SER-122; SER-138; THR-143; SER-156; SER-160; SER-163 AND SER-218</scope>
    <scope>IDENTIFICATION BY MASS SPECTROMETRY [LARGE SCALE ANALYSIS]</scope>
</reference>
<reference key="6">
    <citation type="journal article" date="2014" name="Cell Res.">
        <title>MARCKS regulates membrane targeting of Rab10 vesicles to promote axon development.</title>
        <authorList>
            <person name="Xu X.H."/>
            <person name="Deng C.Y."/>
            <person name="Liu Y."/>
            <person name="He M."/>
            <person name="Peng J."/>
            <person name="Wang T."/>
            <person name="Yuan L."/>
            <person name="Zheng Z.S."/>
            <person name="Blackshear P.J."/>
            <person name="Luo Z.G."/>
        </authorList>
    </citation>
    <scope>FUNCTION</scope>
    <scope>INTERACTION WITH RAB10</scope>
    <scope>SUBCELLULAR LOCATION</scope>
</reference>
<organism>
    <name type="scientific">Rattus norvegicus</name>
    <name type="common">Rat</name>
    <dbReference type="NCBI Taxonomy" id="10116"/>
    <lineage>
        <taxon>Eukaryota</taxon>
        <taxon>Metazoa</taxon>
        <taxon>Chordata</taxon>
        <taxon>Craniata</taxon>
        <taxon>Vertebrata</taxon>
        <taxon>Euteleostomi</taxon>
        <taxon>Mammalia</taxon>
        <taxon>Eutheria</taxon>
        <taxon>Euarchontoglires</taxon>
        <taxon>Glires</taxon>
        <taxon>Rodentia</taxon>
        <taxon>Myomorpha</taxon>
        <taxon>Muroidea</taxon>
        <taxon>Muridae</taxon>
        <taxon>Murinae</taxon>
        <taxon>Rattus</taxon>
    </lineage>
</organism>
<protein>
    <recommendedName>
        <fullName>Myristoylated alanine-rich C-kinase substrate</fullName>
        <shortName>MARCKS</shortName>
    </recommendedName>
    <alternativeName>
        <fullName>Protein kinase C substrate 80 kDa protein</fullName>
    </alternativeName>
</protein>
<name>MARCS_RAT</name>
<sequence length="309" mass="29795">MGAQFSKTAAKGEAAAERPGEAAVASSPSKANGQENGHVKVNGDASPAAAEPGAKEELQANGSAPAADKEEPASGGAATPAAADKDEAAAAPEPGAATADKEAAEAEPAEPGSPSAETEGASASSTSSPKAEDGAAPSPSSETPKKKKKRFSFKKSFKLSGFSFKKSKKEAGEGAEAEGATADGAKDEAAAAAGGDAAAAPGEQAGGAGAEGAEGGESREAEAAEPEQPEQPEQPAAEEPRAEEPSEAVGEKAEEPAPGATADDAPSAAGPEQEAPAATDEPAASAAPSASPEPQPECSPEAPPAPVAE</sequence>
<gene>
    <name type="primary">Marcks</name>
    <name type="synonym">Macs</name>
</gene>
<evidence type="ECO:0000250" key="1">
    <source>
        <dbReference type="UniProtKB" id="P12624"/>
    </source>
</evidence>
<evidence type="ECO:0000250" key="2">
    <source>
        <dbReference type="UniProtKB" id="P26645"/>
    </source>
</evidence>
<evidence type="ECO:0000250" key="3">
    <source>
        <dbReference type="UniProtKB" id="P29966"/>
    </source>
</evidence>
<evidence type="ECO:0000256" key="4">
    <source>
        <dbReference type="SAM" id="MobiDB-lite"/>
    </source>
</evidence>
<evidence type="ECO:0000269" key="5">
    <source>
    </source>
</evidence>
<evidence type="ECO:0000269" key="6">
    <source>
    </source>
</evidence>
<evidence type="ECO:0000269" key="7">
    <source>
    </source>
</evidence>
<evidence type="ECO:0000305" key="8"/>
<evidence type="ECO:0007744" key="9">
    <source>
    </source>
</evidence>
<accession>P30009</accession>
<accession>P20468</accession>
<comment type="function">
    <text evidence="2 3 6">Membrane-associated protein that plays a role in the structural modulation of the actin cytoskeleton, chemotaxis, motility, cell adhesion, phagocytosis, and exocytosis through lipid sequestering and/or protein docking to membranes (PubMed:24662485). Thus, exerts an influence on a plethora of physiological processes, such as embryonic development, tissue regeneration, neuronal plasticity, and inflammation. Sequesters phosphatidylinositol 4,5-bisphosphate (PIP2) at lipid rafts in the plasma membrane of quiescent cells, an action reversed by protein kinase C, ultimately inhibiting exocytosis. During inflammation, promotes the migration and adhesion of inflammatory cells and the secretion of cytokines such as tumor necrosis factor (TNF), particularly in macrophages. Plays an essential role in bacteria-induced intracellular reactive oxygen species (ROS) formation in the monocytic cell type. Participates in the regulation of neurite initiation and outgrowth by interacting with components of cellular machinery including CDC42 that regulates cell shape and process extension through modulation of the cytoskeleton (By similarity). Plays also a role in axon development by mediating docking and fusion of RAB10-positive vesicles with the plasma membrane (PubMed:24662485).</text>
</comment>
<comment type="subunit">
    <text evidence="2 6">Interacts with CDC42 (By similarity). Interacts with GTP-bound form of RAB10 (PubMed:24662485). Interacts with calmodulin/CALM1 (By similarity).</text>
</comment>
<comment type="subcellular location">
    <subcellularLocation>
        <location evidence="6">Cell membrane</location>
        <topology evidence="6">Lipid-anchor</topology>
    </subcellularLocation>
    <subcellularLocation>
        <location evidence="3">Cytoplasm</location>
        <location evidence="3">Cytoskeleton</location>
    </subcellularLocation>
    <subcellularLocation>
        <location evidence="3">Cytoplasm</location>
    </subcellularLocation>
    <text evidence="3">PKC-dependent phosphorylation displaces MARCKS from the cell membrane and subsequent dephosphorylation is accompanied by its reassociation with the membrane.</text>
</comment>
<comment type="tissue specificity">
    <text evidence="5">Highest levels found in spleen and brain. Intermediate levels seen in thymus, ovary, lung and heart. Very low levels seen in kidney, skeletal muscle and liver.</text>
</comment>
<comment type="PTM">
    <text evidence="2">Acetylated at Lys-165 by KAT5; acetylation is required for its subsequent phosphorylation. Deacetylated by SIRT2.</text>
</comment>
<comment type="PTM">
    <text evidence="7">Phosphorylation by PKC displaces MARCKS from the membrane. It also inhibits the F-actin cross-linking activity.</text>
</comment>
<comment type="PTM">
    <text evidence="3">Myristoylated. A proper myristoylation is essential for the proper distribution to the plasma membrane.</text>
</comment>
<comment type="similarity">
    <text evidence="8">Belongs to the MARCKS family.</text>
</comment>
<keyword id="KW-0007">Acetylation</keyword>
<keyword id="KW-0009">Actin-binding</keyword>
<keyword id="KW-0112">Calmodulin-binding</keyword>
<keyword id="KW-1003">Cell membrane</keyword>
<keyword id="KW-0963">Cytoplasm</keyword>
<keyword id="KW-0206">Cytoskeleton</keyword>
<keyword id="KW-0903">Direct protein sequencing</keyword>
<keyword id="KW-0449">Lipoprotein</keyword>
<keyword id="KW-0472">Membrane</keyword>
<keyword id="KW-0519">Myristate</keyword>
<keyword id="KW-0597">Phosphoprotein</keyword>
<keyword id="KW-1185">Reference proteome</keyword>
<dbReference type="EMBL" id="M59859">
    <property type="status" value="NOT_ANNOTATED_CDS"/>
    <property type="molecule type" value="mRNA"/>
</dbReference>
<dbReference type="PIR" id="A39773">
    <property type="entry name" value="A39773"/>
</dbReference>
<dbReference type="FunCoup" id="P30009">
    <property type="interactions" value="1623"/>
</dbReference>
<dbReference type="IntAct" id="P30009">
    <property type="interactions" value="3"/>
</dbReference>
<dbReference type="STRING" id="10116.ENSRNOP00000000707"/>
<dbReference type="GlyGen" id="P30009">
    <property type="glycosylation" value="2 sites, 1 O-linked glycan (1 site)"/>
</dbReference>
<dbReference type="iPTMnet" id="P30009"/>
<dbReference type="PhosphoSitePlus" id="P30009"/>
<dbReference type="PaxDb" id="10116-ENSRNOP00000000707"/>
<dbReference type="UCSC" id="RGD:3028">
    <property type="organism name" value="rat"/>
</dbReference>
<dbReference type="AGR" id="RGD:3028"/>
<dbReference type="RGD" id="3028">
    <property type="gene designation" value="Marcks"/>
</dbReference>
<dbReference type="eggNOG" id="ENOG502RB4V">
    <property type="taxonomic scope" value="Eukaryota"/>
</dbReference>
<dbReference type="InParanoid" id="P30009"/>
<dbReference type="OrthoDB" id="9950867at2759"/>
<dbReference type="Reactome" id="R-RNO-399997">
    <property type="pathway name" value="Acetylcholine regulates insulin secretion"/>
</dbReference>
<dbReference type="PRO" id="PR:P30009"/>
<dbReference type="Proteomes" id="UP000002494">
    <property type="component" value="Unplaced"/>
</dbReference>
<dbReference type="GO" id="GO:0032432">
    <property type="term" value="C:actin filament bundle"/>
    <property type="evidence" value="ECO:0000266"/>
    <property type="project" value="RGD"/>
</dbReference>
<dbReference type="GO" id="GO:0043679">
    <property type="term" value="C:axon terminus"/>
    <property type="evidence" value="ECO:0000314"/>
    <property type="project" value="RGD"/>
</dbReference>
<dbReference type="GO" id="GO:0032059">
    <property type="term" value="C:bleb"/>
    <property type="evidence" value="ECO:0000314"/>
    <property type="project" value="RGD"/>
</dbReference>
<dbReference type="GO" id="GO:0005938">
    <property type="term" value="C:cell cortex"/>
    <property type="evidence" value="ECO:0000266"/>
    <property type="project" value="RGD"/>
</dbReference>
<dbReference type="GO" id="GO:0005813">
    <property type="term" value="C:centrosome"/>
    <property type="evidence" value="ECO:0000266"/>
    <property type="project" value="RGD"/>
</dbReference>
<dbReference type="GO" id="GO:0033391">
    <property type="term" value="C:chromatoid body"/>
    <property type="evidence" value="ECO:0000314"/>
    <property type="project" value="RGD"/>
</dbReference>
<dbReference type="GO" id="GO:0005737">
    <property type="term" value="C:cytoplasm"/>
    <property type="evidence" value="ECO:0000314"/>
    <property type="project" value="UniProtKB"/>
</dbReference>
<dbReference type="GO" id="GO:0044307">
    <property type="term" value="C:dendritic branch"/>
    <property type="evidence" value="ECO:0000314"/>
    <property type="project" value="RGD"/>
</dbReference>
<dbReference type="GO" id="GO:0043197">
    <property type="term" value="C:dendritic spine"/>
    <property type="evidence" value="ECO:0000314"/>
    <property type="project" value="RGD"/>
</dbReference>
<dbReference type="GO" id="GO:0042585">
    <property type="term" value="C:germinal vesicle"/>
    <property type="evidence" value="ECO:0000266"/>
    <property type="project" value="RGD"/>
</dbReference>
<dbReference type="GO" id="GO:0098978">
    <property type="term" value="C:glutamatergic synapse"/>
    <property type="evidence" value="ECO:0000314"/>
    <property type="project" value="SynGO"/>
</dbReference>
<dbReference type="GO" id="GO:0030426">
    <property type="term" value="C:growth cone"/>
    <property type="evidence" value="ECO:0000314"/>
    <property type="project" value="RGD"/>
</dbReference>
<dbReference type="GO" id="GO:0016020">
    <property type="term" value="C:membrane"/>
    <property type="evidence" value="ECO:0000266"/>
    <property type="project" value="RGD"/>
</dbReference>
<dbReference type="GO" id="GO:0005874">
    <property type="term" value="C:microtubule"/>
    <property type="evidence" value="ECO:0000314"/>
    <property type="project" value="RGD"/>
</dbReference>
<dbReference type="GO" id="GO:0043226">
    <property type="term" value="C:organelle"/>
    <property type="evidence" value="ECO:0000266"/>
    <property type="project" value="RGD"/>
</dbReference>
<dbReference type="GO" id="GO:0001520">
    <property type="term" value="C:outer dense fiber"/>
    <property type="evidence" value="ECO:0000314"/>
    <property type="project" value="RGD"/>
</dbReference>
<dbReference type="GO" id="GO:0005886">
    <property type="term" value="C:plasma membrane"/>
    <property type="evidence" value="ECO:0000318"/>
    <property type="project" value="GO_Central"/>
</dbReference>
<dbReference type="GO" id="GO:0099571">
    <property type="term" value="C:postsynaptic cytoskeleton"/>
    <property type="evidence" value="ECO:0000314"/>
    <property type="project" value="SynGO"/>
</dbReference>
<dbReference type="GO" id="GO:0045211">
    <property type="term" value="C:postsynaptic membrane"/>
    <property type="evidence" value="ECO:0000314"/>
    <property type="project" value="SynGO"/>
</dbReference>
<dbReference type="GO" id="GO:0099523">
    <property type="term" value="C:presynaptic cytosol"/>
    <property type="evidence" value="ECO:0000314"/>
    <property type="project" value="SynGO"/>
</dbReference>
<dbReference type="GO" id="GO:0042734">
    <property type="term" value="C:presynaptic membrane"/>
    <property type="evidence" value="ECO:0000314"/>
    <property type="project" value="SynGO"/>
</dbReference>
<dbReference type="GO" id="GO:0051015">
    <property type="term" value="F:actin filament binding"/>
    <property type="evidence" value="ECO:0000266"/>
    <property type="project" value="RGD"/>
</dbReference>
<dbReference type="GO" id="GO:0005516">
    <property type="term" value="F:calmodulin binding"/>
    <property type="evidence" value="ECO:0000266"/>
    <property type="project" value="RGD"/>
</dbReference>
<dbReference type="GO" id="GO:0042802">
    <property type="term" value="F:identical protein binding"/>
    <property type="evidence" value="ECO:0000266"/>
    <property type="project" value="RGD"/>
</dbReference>
<dbReference type="GO" id="GO:0001786">
    <property type="term" value="F:phosphatidylserine binding"/>
    <property type="evidence" value="ECO:0000314"/>
    <property type="project" value="RGD"/>
</dbReference>
<dbReference type="GO" id="GO:0005543">
    <property type="term" value="F:phospholipid binding"/>
    <property type="evidence" value="ECO:0000314"/>
    <property type="project" value="RGD"/>
</dbReference>
<dbReference type="GO" id="GO:0005080">
    <property type="term" value="F:protein kinase C binding"/>
    <property type="evidence" value="ECO:0000266"/>
    <property type="project" value="RGD"/>
</dbReference>
<dbReference type="GO" id="GO:0051764">
    <property type="term" value="P:actin crosslink formation"/>
    <property type="evidence" value="ECO:0000266"/>
    <property type="project" value="RGD"/>
</dbReference>
<dbReference type="GO" id="GO:0051017">
    <property type="term" value="P:actin filament bundle assembly"/>
    <property type="evidence" value="ECO:0000266"/>
    <property type="project" value="RGD"/>
</dbReference>
<dbReference type="GO" id="GO:0007015">
    <property type="term" value="P:actin filament organization"/>
    <property type="evidence" value="ECO:0000315"/>
    <property type="project" value="RGD"/>
</dbReference>
<dbReference type="GO" id="GO:0006915">
    <property type="term" value="P:apoptotic process"/>
    <property type="evidence" value="ECO:0000266"/>
    <property type="project" value="RGD"/>
</dbReference>
<dbReference type="GO" id="GO:0031589">
    <property type="term" value="P:cell-substrate adhesion"/>
    <property type="evidence" value="ECO:0000314"/>
    <property type="project" value="RGD"/>
</dbReference>
<dbReference type="GO" id="GO:0007417">
    <property type="term" value="P:central nervous system development"/>
    <property type="evidence" value="ECO:0000318"/>
    <property type="project" value="GO_Central"/>
</dbReference>
<dbReference type="GO" id="GO:0006886">
    <property type="term" value="P:intracellular protein transport"/>
    <property type="evidence" value="ECO:0000315"/>
    <property type="project" value="RGD"/>
</dbReference>
<dbReference type="GO" id="GO:0007005">
    <property type="term" value="P:mitochondrion organization"/>
    <property type="evidence" value="ECO:0000266"/>
    <property type="project" value="RGD"/>
</dbReference>
<dbReference type="GO" id="GO:0021915">
    <property type="term" value="P:neural tube development"/>
    <property type="evidence" value="ECO:0000266"/>
    <property type="project" value="RGD"/>
</dbReference>
<dbReference type="GO" id="GO:0022008">
    <property type="term" value="P:neurogenesis"/>
    <property type="evidence" value="ECO:0000266"/>
    <property type="project" value="RGD"/>
</dbReference>
<dbReference type="GO" id="GO:0061003">
    <property type="term" value="P:positive regulation of dendritic spine morphogenesis"/>
    <property type="evidence" value="ECO:0000315"/>
    <property type="project" value="RGD"/>
</dbReference>
<dbReference type="GO" id="GO:0046628">
    <property type="term" value="P:positive regulation of insulin receptor signaling pathway"/>
    <property type="evidence" value="ECO:0000315"/>
    <property type="project" value="RGD"/>
</dbReference>
<dbReference type="GO" id="GO:0010976">
    <property type="term" value="P:positive regulation of neuron projection development"/>
    <property type="evidence" value="ECO:0000315"/>
    <property type="project" value="RGD"/>
</dbReference>
<dbReference type="GO" id="GO:1905274">
    <property type="term" value="P:regulation of modification of postsynaptic actin cytoskeleton"/>
    <property type="evidence" value="ECO:0000314"/>
    <property type="project" value="SynGO"/>
</dbReference>
<dbReference type="GO" id="GO:0034976">
    <property type="term" value="P:response to endoplasmic reticulum stress"/>
    <property type="evidence" value="ECO:0000266"/>
    <property type="project" value="RGD"/>
</dbReference>
<dbReference type="GO" id="GO:0003229">
    <property type="term" value="P:ventricular cardiac muscle tissue development"/>
    <property type="evidence" value="ECO:0000270"/>
    <property type="project" value="RGD"/>
</dbReference>
<dbReference type="InterPro" id="IPR002101">
    <property type="entry name" value="MARCKS"/>
</dbReference>
<dbReference type="PANTHER" id="PTHR14353:SF9">
    <property type="entry name" value="MYRISTOYLATED ALANINE-RICH C-KINASE SUBSTRATE"/>
    <property type="match status" value="1"/>
</dbReference>
<dbReference type="PANTHER" id="PTHR14353">
    <property type="entry name" value="MYRISTOYLATED ALANINE-RICH C-KINASE SUBSTRATE MARCKS"/>
    <property type="match status" value="1"/>
</dbReference>
<dbReference type="Pfam" id="PF02063">
    <property type="entry name" value="MARCKS"/>
    <property type="match status" value="1"/>
</dbReference>
<dbReference type="PRINTS" id="PR00963">
    <property type="entry name" value="MARCKS"/>
</dbReference>
<dbReference type="PROSITE" id="PS00826">
    <property type="entry name" value="MARCKS_1"/>
    <property type="match status" value="1"/>
</dbReference>
<dbReference type="PROSITE" id="PS00827">
    <property type="entry name" value="MARCKS_2"/>
    <property type="match status" value="1"/>
</dbReference>
<feature type="initiator methionine" description="Removed" evidence="1">
    <location>
        <position position="1"/>
    </location>
</feature>
<feature type="chain" id="PRO_0000157150" description="Myristoylated alanine-rich C-kinase substrate">
    <location>
        <begin position="2"/>
        <end position="309"/>
    </location>
</feature>
<feature type="region of interest" description="Disordered" evidence="4">
    <location>
        <begin position="1"/>
        <end position="309"/>
    </location>
</feature>
<feature type="region of interest" description="Calmodulin-binding (PSD)">
    <location>
        <begin position="145"/>
        <end position="169"/>
    </location>
</feature>
<feature type="compositionally biased region" description="Polar residues" evidence="4">
    <location>
        <begin position="26"/>
        <end position="35"/>
    </location>
</feature>
<feature type="compositionally biased region" description="Low complexity" evidence="4">
    <location>
        <begin position="73"/>
        <end position="82"/>
    </location>
</feature>
<feature type="compositionally biased region" description="Low complexity" evidence="4">
    <location>
        <begin position="89"/>
        <end position="98"/>
    </location>
</feature>
<feature type="compositionally biased region" description="Low complexity" evidence="4">
    <location>
        <begin position="109"/>
        <end position="142"/>
    </location>
</feature>
<feature type="compositionally biased region" description="Basic residues" evidence="4">
    <location>
        <begin position="145"/>
        <end position="157"/>
    </location>
</feature>
<feature type="compositionally biased region" description="Low complexity" evidence="4">
    <location>
        <begin position="190"/>
        <end position="203"/>
    </location>
</feature>
<feature type="compositionally biased region" description="Gly residues" evidence="4">
    <location>
        <begin position="204"/>
        <end position="215"/>
    </location>
</feature>
<feature type="compositionally biased region" description="Basic and acidic residues" evidence="4">
    <location>
        <begin position="238"/>
        <end position="255"/>
    </location>
</feature>
<feature type="compositionally biased region" description="Low complexity" evidence="4">
    <location>
        <begin position="271"/>
        <end position="290"/>
    </location>
</feature>
<feature type="compositionally biased region" description="Pro residues" evidence="4">
    <location>
        <begin position="291"/>
        <end position="309"/>
    </location>
</feature>
<feature type="modified residue" description="Phosphoserine" evidence="9">
    <location>
        <position position="26"/>
    </location>
</feature>
<feature type="modified residue" description="Phosphoserine" evidence="9">
    <location>
        <position position="27"/>
    </location>
</feature>
<feature type="modified residue" description="Phosphoserine" evidence="9">
    <location>
        <position position="29"/>
    </location>
</feature>
<feature type="modified residue" description="Phosphoserine" evidence="9">
    <location>
        <position position="46"/>
    </location>
</feature>
<feature type="modified residue" description="Phosphoserine" evidence="9">
    <location>
        <position position="63"/>
    </location>
</feature>
<feature type="modified residue" description="Phosphoserine" evidence="9">
    <location>
        <position position="74"/>
    </location>
</feature>
<feature type="modified residue" description="Phosphothreonine" evidence="9">
    <location>
        <position position="79"/>
    </location>
</feature>
<feature type="modified residue" description="Phosphoserine" evidence="9">
    <location>
        <position position="113"/>
    </location>
</feature>
<feature type="modified residue" description="Phosphoserine" evidence="9">
    <location>
        <position position="122"/>
    </location>
</feature>
<feature type="modified residue" description="Phosphoserine" evidence="1">
    <location>
        <position position="128"/>
    </location>
</feature>
<feature type="modified residue" description="Phosphoserine" evidence="9">
    <location>
        <position position="138"/>
    </location>
</feature>
<feature type="modified residue" description="Phosphoserine" evidence="3">
    <location>
        <position position="140"/>
    </location>
</feature>
<feature type="modified residue" description="Phosphoserine" evidence="2">
    <location>
        <position position="141"/>
    </location>
</feature>
<feature type="modified residue" description="Phosphothreonine" evidence="9">
    <location>
        <position position="143"/>
    </location>
</feature>
<feature type="modified residue" description="Phosphoserine; by PKC" evidence="7">
    <location>
        <position position="152"/>
    </location>
</feature>
<feature type="modified residue" description="Phosphoserine; by PKC" evidence="7 9">
    <location>
        <position position="156"/>
    </location>
</feature>
<feature type="modified residue" description="Phosphoserine" evidence="9">
    <location>
        <position position="160"/>
    </location>
</feature>
<feature type="modified residue" description="Phosphoserine; by PKC" evidence="7 9">
    <location>
        <position position="163"/>
    </location>
</feature>
<feature type="modified residue" description="N6-acetyllysine" evidence="2">
    <location>
        <position position="165"/>
    </location>
</feature>
<feature type="modified residue" description="Phosphoserine" evidence="9">
    <location>
        <position position="218"/>
    </location>
</feature>
<feature type="modified residue" description="Phosphoserine" evidence="2">
    <location>
        <position position="246"/>
    </location>
</feature>
<feature type="modified residue" description="Phosphoserine" evidence="3">
    <location>
        <position position="291"/>
    </location>
</feature>
<feature type="lipid moiety-binding region" description="N-myristoyl glycine" evidence="3">
    <location>
        <position position="2"/>
    </location>
</feature>
<feature type="sequence conflict" description="In Ref. 2; AA sequence." evidence="8" ref="2">
    <original>S</original>
    <variation>G</variation>
    <location>
        <position position="29"/>
    </location>
</feature>
<feature type="sequence conflict" description="In Ref. 3." evidence="8" ref="3">
    <original>D</original>
    <variation>E</variation>
    <location>
        <position position="183"/>
    </location>
</feature>
<feature type="sequence conflict" description="In Ref. 2; AA sequence." evidence="8" ref="2">
    <original>G</original>
    <variation>E</variation>
    <location>
        <position position="216"/>
    </location>
</feature>